<keyword id="KW-0843">Virulence</keyword>
<protein>
    <recommendedName>
        <fullName evidence="3">Botcinic acid biosynthesis cluster B protein 16</fullName>
    </recommendedName>
</protein>
<dbReference type="EMBL" id="FR718885">
    <property type="protein sequence ID" value="CBX87039.1"/>
    <property type="molecule type" value="Genomic_DNA"/>
</dbReference>
<dbReference type="Gene3D" id="3.40.50.720">
    <property type="entry name" value="NAD(P)-binding Rossmann-like Domain"/>
    <property type="match status" value="1"/>
</dbReference>
<evidence type="ECO:0000269" key="1">
    <source>
    </source>
</evidence>
<evidence type="ECO:0000269" key="2">
    <source>
    </source>
</evidence>
<evidence type="ECO:0000303" key="3">
    <source>
    </source>
</evidence>
<evidence type="ECO:0000305" key="4">
    <source>
    </source>
</evidence>
<evidence type="ECO:0000305" key="5">
    <source>
    </source>
</evidence>
<reference key="1">
    <citation type="journal article" date="2011" name="Mol. Plant Pathol.">
        <title>The Botrytis cinerea phytotoxin botcinic acid requires two polyketide synthases for production and has a redundant role in virulence with botrydial.</title>
        <authorList>
            <person name="Dalmais B."/>
            <person name="Schumacher J."/>
            <person name="Moraga J."/>
            <person name="Le Pecheur P."/>
            <person name="Tudzynski B."/>
            <person name="Collado I.G."/>
            <person name="Viaud M."/>
        </authorList>
    </citation>
    <scope>NUCLEOTIDE SEQUENCE [GENOMIC DNA]</scope>
    <scope>FUNCTION</scope>
    <scope>PATHWAY</scope>
    <source>
        <strain>B05.10</strain>
    </source>
</reference>
<reference key="2">
    <citation type="journal article" date="2013" name="ChemBioChem">
        <title>A shared biosynthetic pathway for botcinins and botrylactones revealed through gene deletions.</title>
        <authorList>
            <person name="Massaroli M."/>
            <person name="Moraga J."/>
            <person name="Bastos Borges K."/>
            <person name="Ramirez-Fernandez J."/>
            <person name="Viaud M."/>
            <person name="Gonzalez Collado I."/>
            <person name="Duran-Patron R."/>
            <person name="Hernandez-Galan R."/>
        </authorList>
    </citation>
    <scope>FUNCTION</scope>
</reference>
<gene>
    <name evidence="3" type="primary">BOA16</name>
</gene>
<comment type="function">
    <text evidence="1 2 5">Part of the gene cluster B that mediates the biosynthesis of botcinic acid and its botcinin derivatives, acetate-derived polyketides that contribute to virulence when combined with the sesquiterpene botrydial (PubMed:21722295). Botcinic acid and its derivatives have been shown to induce chlorosis and necrosis during host plant infection, but also have antifungal activities (PubMed:21722295). Two polyketide synthases, BOA6 and BOA9, are involved in the biosynthesis of botcinins. BOA6 mediates the formation of the per-methylated tetraketide core by condensation of four units of malonyl-CoA with one unit of acetyl-CoA, which would be methylated in activated methylene groups to yield a bicyclic acid intermediate that could then either be converted to botrylactone derivatives or lose the starter acetate unit through a retro-Claisen type C-C bond cleavage to yield botcinin derivatives (PubMed:23203902). The second polyketide synthase, BOA9, is probably required for the biosynthesis of the tetraketide side chain of botcinins (Probable). The methyltransferase (MT) domain within BOA6 is probably responsible for the incorporation of four methyl groups (Probable). The trans-enoyl reductase BOA5 might take over the enoyl reductase function of BOA6 that misses an ER domain (Probable). The monooxygenases BOA2, BOA3 and BOA4 might be involved in further hydroxylations at C4, C5 and C8, whereas BOA7, close to BOA9, could potentially be involved in the hydroxylation at C4 in the side chain of botcinins (Probable).</text>
</comment>
<comment type="pathway">
    <text evidence="4">Polyketide biosynthesis.</text>
</comment>
<name>BOA16_BOTFB</name>
<feature type="chain" id="PRO_0000444652" description="Botcinic acid biosynthesis cluster B protein 16">
    <location>
        <begin position="1"/>
        <end position="158"/>
    </location>
</feature>
<sequence length="158" mass="16833">MALEAAKALQQLRTGDLNAFNFVYISGEGATSNPGPFTPLFGRVKGETETGLMKIQSKVANFRLFIVRPSHVDSKGHKAIAPYIPQPTVLLRAANLALGPALRGFLKPYNSPTAPLGEFLVDLATGAQQGRLHGDGVECRGASTIISNVGFRRLMGLS</sequence>
<accession>G0LEU4</accession>
<organism>
    <name type="scientific">Botryotinia fuckeliana (strain B05.10)</name>
    <name type="common">Noble rot fungus</name>
    <name type="synonym">Botrytis cinerea</name>
    <dbReference type="NCBI Taxonomy" id="332648"/>
    <lineage>
        <taxon>Eukaryota</taxon>
        <taxon>Fungi</taxon>
        <taxon>Dikarya</taxon>
        <taxon>Ascomycota</taxon>
        <taxon>Pezizomycotina</taxon>
        <taxon>Leotiomycetes</taxon>
        <taxon>Helotiales</taxon>
        <taxon>Sclerotiniaceae</taxon>
        <taxon>Botrytis</taxon>
    </lineage>
</organism>
<proteinExistence type="predicted"/>